<protein>
    <recommendedName>
        <fullName evidence="1">Ribosome maturation factor RimM</fullName>
    </recommendedName>
</protein>
<organism>
    <name type="scientific">Staphylococcus aureus (strain MSSA476)</name>
    <dbReference type="NCBI Taxonomy" id="282459"/>
    <lineage>
        <taxon>Bacteria</taxon>
        <taxon>Bacillati</taxon>
        <taxon>Bacillota</taxon>
        <taxon>Bacilli</taxon>
        <taxon>Bacillales</taxon>
        <taxon>Staphylococcaceae</taxon>
        <taxon>Staphylococcus</taxon>
    </lineage>
</organism>
<comment type="function">
    <text evidence="1">An accessory protein needed during the final step in the assembly of 30S ribosomal subunit, possibly for assembly of the head region. Essential for efficient processing of 16S rRNA. May be needed both before and after RbfA during the maturation of 16S rRNA. It has affinity for free ribosomal 30S subunits but not for 70S ribosomes.</text>
</comment>
<comment type="subunit">
    <text evidence="1">Binds ribosomal protein uS19.</text>
</comment>
<comment type="subcellular location">
    <subcellularLocation>
        <location evidence="1">Cytoplasm</location>
    </subcellularLocation>
</comment>
<comment type="domain">
    <text evidence="1">The PRC barrel domain binds ribosomal protein uS19.</text>
</comment>
<comment type="similarity">
    <text evidence="1">Belongs to the RimM family.</text>
</comment>
<feature type="chain" id="PRO_0000163355" description="Ribosome maturation factor RimM">
    <location>
        <begin position="1"/>
        <end position="167"/>
    </location>
</feature>
<feature type="domain" description="PRC barrel" evidence="1">
    <location>
        <begin position="94"/>
        <end position="165"/>
    </location>
</feature>
<keyword id="KW-0143">Chaperone</keyword>
<keyword id="KW-0963">Cytoplasm</keyword>
<keyword id="KW-0690">Ribosome biogenesis</keyword>
<keyword id="KW-0698">rRNA processing</keyword>
<accession>Q6G9X4</accession>
<dbReference type="EMBL" id="BX571857">
    <property type="protein sequence ID" value="CAG42950.1"/>
    <property type="molecule type" value="Genomic_DNA"/>
</dbReference>
<dbReference type="RefSeq" id="WP_001261987.1">
    <property type="nucleotide sequence ID" value="NC_002953.3"/>
</dbReference>
<dbReference type="SMR" id="Q6G9X4"/>
<dbReference type="KEGG" id="sas:SAS1173"/>
<dbReference type="HOGENOM" id="CLU_077636_3_1_9"/>
<dbReference type="GO" id="GO:0005737">
    <property type="term" value="C:cytoplasm"/>
    <property type="evidence" value="ECO:0007669"/>
    <property type="project" value="UniProtKB-SubCell"/>
</dbReference>
<dbReference type="GO" id="GO:0005840">
    <property type="term" value="C:ribosome"/>
    <property type="evidence" value="ECO:0007669"/>
    <property type="project" value="InterPro"/>
</dbReference>
<dbReference type="GO" id="GO:0043022">
    <property type="term" value="F:ribosome binding"/>
    <property type="evidence" value="ECO:0007669"/>
    <property type="project" value="InterPro"/>
</dbReference>
<dbReference type="GO" id="GO:0042274">
    <property type="term" value="P:ribosomal small subunit biogenesis"/>
    <property type="evidence" value="ECO:0007669"/>
    <property type="project" value="UniProtKB-UniRule"/>
</dbReference>
<dbReference type="GO" id="GO:0006364">
    <property type="term" value="P:rRNA processing"/>
    <property type="evidence" value="ECO:0007669"/>
    <property type="project" value="UniProtKB-UniRule"/>
</dbReference>
<dbReference type="Gene3D" id="2.30.30.240">
    <property type="entry name" value="PRC-barrel domain"/>
    <property type="match status" value="1"/>
</dbReference>
<dbReference type="Gene3D" id="2.40.30.60">
    <property type="entry name" value="RimM"/>
    <property type="match status" value="1"/>
</dbReference>
<dbReference type="HAMAP" id="MF_00014">
    <property type="entry name" value="Ribosome_mat_RimM"/>
    <property type="match status" value="1"/>
</dbReference>
<dbReference type="InterPro" id="IPR011033">
    <property type="entry name" value="PRC_barrel-like_sf"/>
</dbReference>
<dbReference type="InterPro" id="IPR056792">
    <property type="entry name" value="PRC_RimM"/>
</dbReference>
<dbReference type="InterPro" id="IPR011961">
    <property type="entry name" value="RimM"/>
</dbReference>
<dbReference type="InterPro" id="IPR002676">
    <property type="entry name" value="RimM_N"/>
</dbReference>
<dbReference type="InterPro" id="IPR036976">
    <property type="entry name" value="RimM_N_sf"/>
</dbReference>
<dbReference type="InterPro" id="IPR009000">
    <property type="entry name" value="Transl_B-barrel_sf"/>
</dbReference>
<dbReference type="NCBIfam" id="TIGR02273">
    <property type="entry name" value="16S_RimM"/>
    <property type="match status" value="1"/>
</dbReference>
<dbReference type="PANTHER" id="PTHR33692">
    <property type="entry name" value="RIBOSOME MATURATION FACTOR RIMM"/>
    <property type="match status" value="1"/>
</dbReference>
<dbReference type="PANTHER" id="PTHR33692:SF1">
    <property type="entry name" value="RIBOSOME MATURATION FACTOR RIMM"/>
    <property type="match status" value="1"/>
</dbReference>
<dbReference type="Pfam" id="PF24986">
    <property type="entry name" value="PRC_RimM"/>
    <property type="match status" value="1"/>
</dbReference>
<dbReference type="Pfam" id="PF01782">
    <property type="entry name" value="RimM"/>
    <property type="match status" value="1"/>
</dbReference>
<dbReference type="SUPFAM" id="SSF50346">
    <property type="entry name" value="PRC-barrel domain"/>
    <property type="match status" value="1"/>
</dbReference>
<dbReference type="SUPFAM" id="SSF50447">
    <property type="entry name" value="Translation proteins"/>
    <property type="match status" value="1"/>
</dbReference>
<proteinExistence type="inferred from homology"/>
<reference key="1">
    <citation type="journal article" date="2004" name="Proc. Natl. Acad. Sci. U.S.A.">
        <title>Complete genomes of two clinical Staphylococcus aureus strains: evidence for the rapid evolution of virulence and drug resistance.</title>
        <authorList>
            <person name="Holden M.T.G."/>
            <person name="Feil E.J."/>
            <person name="Lindsay J.A."/>
            <person name="Peacock S.J."/>
            <person name="Day N.P.J."/>
            <person name="Enright M.C."/>
            <person name="Foster T.J."/>
            <person name="Moore C.E."/>
            <person name="Hurst L."/>
            <person name="Atkin R."/>
            <person name="Barron A."/>
            <person name="Bason N."/>
            <person name="Bentley S.D."/>
            <person name="Chillingworth C."/>
            <person name="Chillingworth T."/>
            <person name="Churcher C."/>
            <person name="Clark L."/>
            <person name="Corton C."/>
            <person name="Cronin A."/>
            <person name="Doggett J."/>
            <person name="Dowd L."/>
            <person name="Feltwell T."/>
            <person name="Hance Z."/>
            <person name="Harris B."/>
            <person name="Hauser H."/>
            <person name="Holroyd S."/>
            <person name="Jagels K."/>
            <person name="James K.D."/>
            <person name="Lennard N."/>
            <person name="Line A."/>
            <person name="Mayes R."/>
            <person name="Moule S."/>
            <person name="Mungall K."/>
            <person name="Ormond D."/>
            <person name="Quail M.A."/>
            <person name="Rabbinowitsch E."/>
            <person name="Rutherford K.M."/>
            <person name="Sanders M."/>
            <person name="Sharp S."/>
            <person name="Simmonds M."/>
            <person name="Stevens K."/>
            <person name="Whitehead S."/>
            <person name="Barrell B.G."/>
            <person name="Spratt B.G."/>
            <person name="Parkhill J."/>
        </authorList>
    </citation>
    <scope>NUCLEOTIDE SEQUENCE [LARGE SCALE GENOMIC DNA]</scope>
    <source>
        <strain>MSSA476</strain>
    </source>
</reference>
<gene>
    <name evidence="1" type="primary">rimM</name>
    <name type="ordered locus">SAS1173</name>
</gene>
<name>RIMM_STAAS</name>
<sequence>MRVEVGQIVNTHGIKGEIKVKSNSDFTDVRFQPGQVLTVVHNNNDLEYTVKSHRVHKGLHMLTFEGINNINDIEHLKGSSIYQERDHEDIVLEENEFYYSDIIGCTVFDDQETPIGRVINIFETGANDVWVIKGSKEYLIPYIADVVKEVDVENKKIIITPMEGLLD</sequence>
<evidence type="ECO:0000255" key="1">
    <source>
        <dbReference type="HAMAP-Rule" id="MF_00014"/>
    </source>
</evidence>